<feature type="chain" id="PRO_0000316921" description="Capsid protein">
    <location>
        <begin position="1"/>
        <end position="244"/>
    </location>
</feature>
<feature type="region of interest" description="Disordered" evidence="2">
    <location>
        <begin position="1"/>
        <end position="39"/>
    </location>
</feature>
<feature type="short sequence motif" description="Bipartite nuclear localization signal" evidence="1">
    <location>
        <begin position="1"/>
        <end position="24"/>
    </location>
</feature>
<name>CAPSD_MSVRA</name>
<gene>
    <name type="ORF">V1</name>
</gene>
<keyword id="KW-0167">Capsid protein</keyword>
<keyword id="KW-0238">DNA-binding</keyword>
<keyword id="KW-1048">Host nucleus</keyword>
<keyword id="KW-1185">Reference proteome</keyword>
<keyword id="KW-1140">T=1 icosahedral capsid protein</keyword>
<keyword id="KW-1163">Viral penetration into host nucleus</keyword>
<keyword id="KW-0946">Virion</keyword>
<keyword id="KW-1160">Virus entry into host cell</keyword>
<protein>
    <recommendedName>
        <fullName>Capsid protein</fullName>
    </recommendedName>
    <alternativeName>
        <fullName>Coat protein</fullName>
        <shortName>CP</shortName>
    </alternativeName>
</protein>
<dbReference type="EMBL" id="AF329889">
    <property type="protein sequence ID" value="AAK73472.1"/>
    <property type="molecule type" value="Genomic_DNA"/>
</dbReference>
<dbReference type="SMR" id="Q91MF9"/>
<dbReference type="Proteomes" id="UP000007781">
    <property type="component" value="Genome"/>
</dbReference>
<dbReference type="GO" id="GO:0043657">
    <property type="term" value="C:host cell"/>
    <property type="evidence" value="ECO:0007669"/>
    <property type="project" value="GOC"/>
</dbReference>
<dbReference type="GO" id="GO:0042025">
    <property type="term" value="C:host cell nucleus"/>
    <property type="evidence" value="ECO:0007669"/>
    <property type="project" value="UniProtKB-SubCell"/>
</dbReference>
<dbReference type="GO" id="GO:0039615">
    <property type="term" value="C:T=1 icosahedral viral capsid"/>
    <property type="evidence" value="ECO:0007669"/>
    <property type="project" value="UniProtKB-KW"/>
</dbReference>
<dbReference type="GO" id="GO:0003677">
    <property type="term" value="F:DNA binding"/>
    <property type="evidence" value="ECO:0007669"/>
    <property type="project" value="UniProtKB-KW"/>
</dbReference>
<dbReference type="GO" id="GO:0005198">
    <property type="term" value="F:structural molecule activity"/>
    <property type="evidence" value="ECO:0007669"/>
    <property type="project" value="InterPro"/>
</dbReference>
<dbReference type="GO" id="GO:0046718">
    <property type="term" value="P:symbiont entry into host cell"/>
    <property type="evidence" value="ECO:0007669"/>
    <property type="project" value="UniProtKB-KW"/>
</dbReference>
<dbReference type="GO" id="GO:0075732">
    <property type="term" value="P:viral penetration into host nucleus"/>
    <property type="evidence" value="ECO:0007669"/>
    <property type="project" value="UniProtKB-KW"/>
</dbReference>
<dbReference type="Gene3D" id="2.60.120.20">
    <property type="match status" value="1"/>
</dbReference>
<dbReference type="InterPro" id="IPR000143">
    <property type="entry name" value="Gemcoat_MSV"/>
</dbReference>
<dbReference type="InterPro" id="IPR000263">
    <property type="entry name" value="GV_A/BR1_coat"/>
</dbReference>
<dbReference type="InterPro" id="IPR029053">
    <property type="entry name" value="Viral_coat"/>
</dbReference>
<dbReference type="Pfam" id="PF00844">
    <property type="entry name" value="Gemini_coat"/>
    <property type="match status" value="1"/>
</dbReference>
<dbReference type="PRINTS" id="PR00223">
    <property type="entry name" value="GEMCOATARBR1"/>
</dbReference>
<dbReference type="PRINTS" id="PR00226">
    <property type="entry name" value="GEMCOATMSV"/>
</dbReference>
<evidence type="ECO:0000250" key="1"/>
<evidence type="ECO:0000256" key="2">
    <source>
        <dbReference type="SAM" id="MobiDB-lite"/>
    </source>
</evidence>
<evidence type="ECO:0000305" key="3"/>
<reference key="1">
    <citation type="journal article" date="2001" name="Virology">
        <title>Sequence diversity and virulence in Zea mays of Maize streak virus isolates.</title>
        <authorList>
            <person name="Martin D.P."/>
            <person name="Willment J.A."/>
            <person name="Billharz R."/>
            <person name="Velders R."/>
            <person name="Odhiambo B."/>
            <person name="Njuguna J."/>
            <person name="James D."/>
            <person name="Rybicki E.P."/>
        </authorList>
    </citation>
    <scope>NUCLEOTIDE SEQUENCE [GENOMIC DNA]</scope>
</reference>
<accession>Q91MF9</accession>
<sequence>MSTSKRKRADEAQWNKRSTKKKGSAPQAKKPGGKGERPSLQIQTLLHSGDTMITVPSGGVCDLINTYARGSDEGNRHTSETLTYKVGVDYHFVADAASCKYSNRGTGVMWLVYDTTPGGNAPTTQDIFAYPSALKAWPTTWKVSRELCHRFVVKRRWLFTMETDGRIGSDTPPSNQSWPPCKRNVDFHKFTSGLGVRTQWKNVTDGGVGAIQRGALYLVIAPGNGITFTAHGQTRLYFKSVGNQ</sequence>
<organismHost>
    <name type="scientific">Avena sativa</name>
    <name type="common">Oat</name>
    <dbReference type="NCBI Taxonomy" id="4498"/>
</organismHost>
<organismHost>
    <name type="scientific">Axonopus compressus</name>
    <dbReference type="NCBI Taxonomy" id="217170"/>
</organismHost>
<organismHost>
    <name type="scientific">Cenchrus americanus</name>
    <name type="common">Pearl millet</name>
    <name type="synonym">Pennisetum glaucum</name>
    <dbReference type="NCBI Taxonomy" id="4543"/>
</organismHost>
<organismHost>
    <name type="scientific">Cenchrus polystachios</name>
    <dbReference type="NCBI Taxonomy" id="281129"/>
</organismHost>
<organismHost>
    <name type="scientific">Coix lacryma-jobi</name>
    <name type="common">Job's tears</name>
    <dbReference type="NCBI Taxonomy" id="4505"/>
</organismHost>
<organismHost>
    <name type="scientific">Dactyloctenium aegyptium</name>
    <dbReference type="NCBI Taxonomy" id="270102"/>
</organismHost>
<organismHost>
    <name type="scientific">Digitaria</name>
    <dbReference type="NCBI Taxonomy" id="66017"/>
</organismHost>
<organismHost>
    <name type="scientific">Echinochloa colona</name>
    <dbReference type="NCBI Taxonomy" id="90396"/>
</organismHost>
<organismHost>
    <name type="scientific">Eleusine coracana</name>
    <name type="common">Indian finger millet</name>
    <name type="synonym">Ragi</name>
    <dbReference type="NCBI Taxonomy" id="4511"/>
</organismHost>
<organismHost>
    <name type="scientific">Eleusine indica</name>
    <name type="common">Goosegrass</name>
    <name type="synonym">Cynosurus indicus</name>
    <dbReference type="NCBI Taxonomy" id="29674"/>
</organismHost>
<organismHost>
    <name type="scientific">Hordeum vulgare</name>
    <name type="common">Barley</name>
    <dbReference type="NCBI Taxonomy" id="4513"/>
</organismHost>
<organismHost>
    <name type="scientific">Megathyrsus maximus</name>
    <dbReference type="NCBI Taxonomy" id="59788"/>
</organismHost>
<organismHost>
    <name type="scientific">Melinis repens</name>
    <name type="common">Red Natal grass</name>
    <name type="synonym">Rhynchelytrum repens</name>
    <dbReference type="NCBI Taxonomy" id="29709"/>
</organismHost>
<organismHost>
    <name type="scientific">Oryza glaberrima</name>
    <name type="common">African rice</name>
    <dbReference type="NCBI Taxonomy" id="4538"/>
</organismHost>
<organismHost>
    <name type="scientific">Oryza sativa</name>
    <name type="common">Rice</name>
    <dbReference type="NCBI Taxonomy" id="4530"/>
</organismHost>
<organismHost>
    <name type="scientific">Paspalum conjugatum</name>
    <name type="common">Hilo grass</name>
    <dbReference type="NCBI Taxonomy" id="158143"/>
</organismHost>
<organismHost>
    <name type="scientific">Paspalum notatum</name>
    <name type="common">Bahia grass</name>
    <dbReference type="NCBI Taxonomy" id="147272"/>
</organismHost>
<organismHost>
    <name type="scientific">Paspalum scrobiculatum</name>
    <dbReference type="NCBI Taxonomy" id="173849"/>
</organismHost>
<organismHost>
    <name type="scientific">Rottboellia cochinchinensis</name>
    <dbReference type="NCBI Taxonomy" id="300125"/>
</organismHost>
<organismHost>
    <name type="scientific">Saccharum officinarum</name>
    <name type="common">Sugarcane</name>
    <dbReference type="NCBI Taxonomy" id="4547"/>
</organismHost>
<organismHost>
    <name type="scientific">Setaria barbata</name>
    <dbReference type="NCBI Taxonomy" id="192628"/>
</organismHost>
<organismHost>
    <name type="scientific">Triticum aestivum</name>
    <name type="common">Wheat</name>
    <dbReference type="NCBI Taxonomy" id="4565"/>
</organismHost>
<organismHost>
    <name type="scientific">Urochloa deflexa</name>
    <dbReference type="NCBI Taxonomy" id="240436"/>
</organismHost>
<organismHost>
    <name type="scientific">Zea mays</name>
    <name type="common">Maize</name>
    <dbReference type="NCBI Taxonomy" id="4577"/>
</organismHost>
<proteinExistence type="inferred from homology"/>
<organism>
    <name type="scientific">Maize streak virus genotype D (isolate Raw)</name>
    <name type="common">MSV</name>
    <dbReference type="NCBI Taxonomy" id="268343"/>
    <lineage>
        <taxon>Viruses</taxon>
        <taxon>Monodnaviria</taxon>
        <taxon>Shotokuvirae</taxon>
        <taxon>Cressdnaviricota</taxon>
        <taxon>Repensiviricetes</taxon>
        <taxon>Geplafuvirales</taxon>
        <taxon>Geminiviridae</taxon>
        <taxon>Mastrevirus</taxon>
        <taxon>Maize streak virus</taxon>
    </lineage>
</organism>
<comment type="function">
    <text evidence="1">Encapsidates the viral genome into characteristic twinned ('geminate') particles. Binds the genomic viral ssDNA and shuttles it into and out of the cell nucleus. Plays a role in protection of the genome from degradation, virus acquisition and transmission by insect vectors, infectivity, and systemic movement. The CP of monopartite geminiviruses is absolutely essential for virus movement (By similarity).</text>
</comment>
<comment type="subunit">
    <text evidence="1">Homomultimer. Interacts with the movement protein. Binds to single-stranded and double-stranded viral DNA (By similarity).</text>
</comment>
<comment type="subcellular location">
    <subcellularLocation>
        <location evidence="1">Virion</location>
    </subcellularLocation>
    <subcellularLocation>
        <location>Host nucleus</location>
    </subcellularLocation>
    <text evidence="1">It is actively transported into the host cell nucleus. It may be exported out of the nucleus through a nuclear export signal for cell-to-cell movement and spread (By similarity).</text>
</comment>
<comment type="similarity">
    <text evidence="3">Belongs to the geminiviridae capsid protein family.</text>
</comment>